<organism>
    <name type="scientific">Conus ventricosus</name>
    <name type="common">Mediterranean cone</name>
    <dbReference type="NCBI Taxonomy" id="117992"/>
    <lineage>
        <taxon>Eukaryota</taxon>
        <taxon>Metazoa</taxon>
        <taxon>Spiralia</taxon>
        <taxon>Lophotrochozoa</taxon>
        <taxon>Mollusca</taxon>
        <taxon>Gastropoda</taxon>
        <taxon>Caenogastropoda</taxon>
        <taxon>Neogastropoda</taxon>
        <taxon>Conoidea</taxon>
        <taxon>Conidae</taxon>
        <taxon>Conus</taxon>
        <taxon>Lautoconus</taxon>
    </lineage>
</organism>
<dbReference type="EMBL" id="AF214964">
    <property type="protein sequence ID" value="AAG60392.1"/>
    <property type="molecule type" value="mRNA"/>
</dbReference>
<dbReference type="EMBL" id="AF214965">
    <property type="protein sequence ID" value="AAG60393.1"/>
    <property type="molecule type" value="mRNA"/>
</dbReference>
<dbReference type="ConoServer" id="651">
    <property type="toxin name" value="Vn5.1 precursor"/>
</dbReference>
<dbReference type="ConoServer" id="652">
    <property type="toxin name" value="Vn5.1 precursor"/>
</dbReference>
<dbReference type="GO" id="GO:0005576">
    <property type="term" value="C:extracellular region"/>
    <property type="evidence" value="ECO:0007669"/>
    <property type="project" value="UniProtKB-SubCell"/>
</dbReference>
<dbReference type="GO" id="GO:0090729">
    <property type="term" value="F:toxin activity"/>
    <property type="evidence" value="ECO:0007669"/>
    <property type="project" value="UniProtKB-KW"/>
</dbReference>
<dbReference type="InterPro" id="IPR031565">
    <property type="entry name" value="T-conotoxin"/>
</dbReference>
<dbReference type="Pfam" id="PF16981">
    <property type="entry name" value="Chi-conotoxin"/>
    <property type="match status" value="1"/>
</dbReference>
<keyword id="KW-0025">Alternative splicing</keyword>
<keyword id="KW-0165">Cleavage on pair of basic residues</keyword>
<keyword id="KW-1015">Disulfide bond</keyword>
<keyword id="KW-0964">Secreted</keyword>
<keyword id="KW-0732">Signal</keyword>
<keyword id="KW-0800">Toxin</keyword>
<comment type="subcellular location">
    <subcellularLocation>
        <location evidence="5">Secreted</location>
    </subcellularLocation>
</comment>
<comment type="alternative products">
    <event type="alternative splicing"/>
    <isoform>
        <id>Q9BPG5-1</id>
        <name>VnMRCL-012</name>
        <sequence type="displayed"/>
    </isoform>
    <isoform>
        <id>Q9BPG5-2</id>
        <name>VnMRCL-03</name>
        <sequence type="described" ref="VSP_038850"/>
    </isoform>
</comment>
<comment type="tissue specificity">
    <text evidence="5">Expressed by the venom duct.</text>
</comment>
<comment type="domain">
    <text evidence="4">The cysteine framework is V (CC-CC).</text>
</comment>
<comment type="PTM">
    <text evidence="4">Contains 2 disulfide bonds that can be either 'C1-C3, C2-C4' or 'C1-C4, C2-C3', since these disulfide connectivities have been observed for conotoxins with cysteine framework V (for examples, see AC P0DQQ7 and AC P81755).</text>
</comment>
<comment type="similarity">
    <text evidence="4">Belongs to the conotoxin T superfamily.</text>
</comment>
<reference key="1">
    <citation type="journal article" date="2001" name="Mol. Biol. Evol.">
        <title>Mechanisms for evolving hypervariability: the case of conopeptides.</title>
        <authorList>
            <person name="Conticello S.G."/>
            <person name="Gilad Y."/>
            <person name="Avidan N."/>
            <person name="Ben-Asher E."/>
            <person name="Levy Z."/>
            <person name="Fainzilber M."/>
        </authorList>
    </citation>
    <scope>NUCLEOTIDE SEQUENCE [MRNA] (ISOFORMS VNMRCL-012 AND VNMRCL-03)</scope>
</reference>
<proteinExistence type="inferred from homology"/>
<accession>Q9BPG5</accession>
<accession>Q9BPG4</accession>
<protein>
    <recommendedName>
        <fullName evidence="3">Conotoxin VnMRCL-012</fullName>
    </recommendedName>
    <alternativeName>
        <fullName evidence="3">VnMRCL-03</fullName>
    </alternativeName>
</protein>
<sequence>MRCLPVFVILLLLIASAPGVDAQPKTKYDVPLASRHDFAKKTPKRLSKPRDCCRRNFLCC</sequence>
<feature type="signal peptide" evidence="2">
    <location>
        <begin position="1"/>
        <end position="22"/>
    </location>
</feature>
<feature type="propeptide" id="PRO_0000392723" evidence="1">
    <location>
        <begin position="23"/>
        <end position="50"/>
    </location>
</feature>
<feature type="peptide" id="PRO_0000392724" description="Conotoxin VnMRCL-012">
    <location>
        <begin position="51"/>
        <end position="60"/>
    </location>
</feature>
<feature type="splice variant" id="VSP_038850" description="In isoform VnMRCL-03." evidence="3">
    <location>
        <begin position="22"/>
        <end position="36"/>
    </location>
</feature>
<name>CT51_CONVE</name>
<evidence type="ECO:0000250" key="1"/>
<evidence type="ECO:0000255" key="2"/>
<evidence type="ECO:0000303" key="3">
    <source>
    </source>
</evidence>
<evidence type="ECO:0000305" key="4"/>
<evidence type="ECO:0000305" key="5">
    <source>
    </source>
</evidence>